<dbReference type="EC" id="2.3.1.234" evidence="1"/>
<dbReference type="EMBL" id="CP000114">
    <property type="protein sequence ID" value="ABA45165.1"/>
    <property type="molecule type" value="Genomic_DNA"/>
</dbReference>
<dbReference type="RefSeq" id="WP_000655088.1">
    <property type="nucleotide sequence ID" value="NC_007432.1"/>
</dbReference>
<dbReference type="SMR" id="Q3JZC7"/>
<dbReference type="KEGG" id="sak:SAK_1779"/>
<dbReference type="HOGENOM" id="CLU_023208_0_2_9"/>
<dbReference type="GO" id="GO:0005737">
    <property type="term" value="C:cytoplasm"/>
    <property type="evidence" value="ECO:0007669"/>
    <property type="project" value="UniProtKB-SubCell"/>
</dbReference>
<dbReference type="GO" id="GO:0005506">
    <property type="term" value="F:iron ion binding"/>
    <property type="evidence" value="ECO:0007669"/>
    <property type="project" value="UniProtKB-UniRule"/>
</dbReference>
<dbReference type="GO" id="GO:0061711">
    <property type="term" value="F:N(6)-L-threonylcarbamoyladenine synthase activity"/>
    <property type="evidence" value="ECO:0007669"/>
    <property type="project" value="UniProtKB-EC"/>
</dbReference>
<dbReference type="GO" id="GO:0002949">
    <property type="term" value="P:tRNA threonylcarbamoyladenosine modification"/>
    <property type="evidence" value="ECO:0007669"/>
    <property type="project" value="UniProtKB-UniRule"/>
</dbReference>
<dbReference type="CDD" id="cd24133">
    <property type="entry name" value="ASKHA_NBD_TsaD_bac"/>
    <property type="match status" value="1"/>
</dbReference>
<dbReference type="FunFam" id="3.30.420.40:FF:000012">
    <property type="entry name" value="tRNA N6-adenosine threonylcarbamoyltransferase"/>
    <property type="match status" value="1"/>
</dbReference>
<dbReference type="FunFam" id="3.30.420.40:FF:000040">
    <property type="entry name" value="tRNA N6-adenosine threonylcarbamoyltransferase"/>
    <property type="match status" value="1"/>
</dbReference>
<dbReference type="Gene3D" id="3.30.420.40">
    <property type="match status" value="2"/>
</dbReference>
<dbReference type="HAMAP" id="MF_01445">
    <property type="entry name" value="TsaD"/>
    <property type="match status" value="1"/>
</dbReference>
<dbReference type="InterPro" id="IPR043129">
    <property type="entry name" value="ATPase_NBD"/>
</dbReference>
<dbReference type="InterPro" id="IPR000905">
    <property type="entry name" value="Gcp-like_dom"/>
</dbReference>
<dbReference type="InterPro" id="IPR017861">
    <property type="entry name" value="KAE1/TsaD"/>
</dbReference>
<dbReference type="InterPro" id="IPR022450">
    <property type="entry name" value="TsaD"/>
</dbReference>
<dbReference type="NCBIfam" id="TIGR00329">
    <property type="entry name" value="gcp_kae1"/>
    <property type="match status" value="1"/>
</dbReference>
<dbReference type="NCBIfam" id="TIGR03723">
    <property type="entry name" value="T6A_TsaD_YgjD"/>
    <property type="match status" value="1"/>
</dbReference>
<dbReference type="PANTHER" id="PTHR11735">
    <property type="entry name" value="TRNA N6-ADENOSINE THREONYLCARBAMOYLTRANSFERASE"/>
    <property type="match status" value="1"/>
</dbReference>
<dbReference type="PANTHER" id="PTHR11735:SF6">
    <property type="entry name" value="TRNA N6-ADENOSINE THREONYLCARBAMOYLTRANSFERASE, MITOCHONDRIAL"/>
    <property type="match status" value="1"/>
</dbReference>
<dbReference type="Pfam" id="PF00814">
    <property type="entry name" value="TsaD"/>
    <property type="match status" value="1"/>
</dbReference>
<dbReference type="PRINTS" id="PR00789">
    <property type="entry name" value="OSIALOPTASE"/>
</dbReference>
<dbReference type="SUPFAM" id="SSF53067">
    <property type="entry name" value="Actin-like ATPase domain"/>
    <property type="match status" value="1"/>
</dbReference>
<name>TSAD_STRA1</name>
<keyword id="KW-0012">Acyltransferase</keyword>
<keyword id="KW-0963">Cytoplasm</keyword>
<keyword id="KW-0408">Iron</keyword>
<keyword id="KW-0479">Metal-binding</keyword>
<keyword id="KW-0808">Transferase</keyword>
<keyword id="KW-0819">tRNA processing</keyword>
<sequence>MKDRYILAVESSCDETSVAILKNDKELLANIIASQVESHKRFGGVVPEVASRHHVEVVTTCFEDALQEAGIVASDLDAVAVTYGPGLVGALLVGMAAAKAFAWANKLPLIPVNHMAGHLMAARDVKELQYPLLALLVSGGHTELVYVSEPGDYKIVGETRDDAVGEAYDKVGRVMGLTYPAGREIDQLAHKGQDTYHFPRAMIKEDHLEFSFSGLKSAFINLHHNAEQKGEALVLEDLCASFQAAVLDILLAKTQKALLKHPVKTLVVAGGVAANQGLRERLATDISPDIDVVIPPLRLCGDNAGMIALAAAIEFEKENFASLKLNAKPSLAFESL</sequence>
<evidence type="ECO:0000255" key="1">
    <source>
        <dbReference type="HAMAP-Rule" id="MF_01445"/>
    </source>
</evidence>
<reference key="1">
    <citation type="journal article" date="2005" name="Proc. Natl. Acad. Sci. U.S.A.">
        <title>Genome analysis of multiple pathogenic isolates of Streptococcus agalactiae: implications for the microbial 'pan-genome'.</title>
        <authorList>
            <person name="Tettelin H."/>
            <person name="Masignani V."/>
            <person name="Cieslewicz M.J."/>
            <person name="Donati C."/>
            <person name="Medini D."/>
            <person name="Ward N.L."/>
            <person name="Angiuoli S.V."/>
            <person name="Crabtree J."/>
            <person name="Jones A.L."/>
            <person name="Durkin A.S."/>
            <person name="DeBoy R.T."/>
            <person name="Davidsen T.M."/>
            <person name="Mora M."/>
            <person name="Scarselli M."/>
            <person name="Margarit y Ros I."/>
            <person name="Peterson J.D."/>
            <person name="Hauser C.R."/>
            <person name="Sundaram J.P."/>
            <person name="Nelson W.C."/>
            <person name="Madupu R."/>
            <person name="Brinkac L.M."/>
            <person name="Dodson R.J."/>
            <person name="Rosovitz M.J."/>
            <person name="Sullivan S.A."/>
            <person name="Daugherty S.C."/>
            <person name="Haft D.H."/>
            <person name="Selengut J."/>
            <person name="Gwinn M.L."/>
            <person name="Zhou L."/>
            <person name="Zafar N."/>
            <person name="Khouri H."/>
            <person name="Radune D."/>
            <person name="Dimitrov G."/>
            <person name="Watkins K."/>
            <person name="O'Connor K.J."/>
            <person name="Smith S."/>
            <person name="Utterback T.R."/>
            <person name="White O."/>
            <person name="Rubens C.E."/>
            <person name="Grandi G."/>
            <person name="Madoff L.C."/>
            <person name="Kasper D.L."/>
            <person name="Telford J.L."/>
            <person name="Wessels M.R."/>
            <person name="Rappuoli R."/>
            <person name="Fraser C.M."/>
        </authorList>
    </citation>
    <scope>NUCLEOTIDE SEQUENCE [LARGE SCALE GENOMIC DNA]</scope>
    <source>
        <strain>ATCC 27591 / A909 / CDC SS700</strain>
    </source>
</reference>
<comment type="function">
    <text evidence="1">Required for the formation of a threonylcarbamoyl group on adenosine at position 37 (t(6)A37) in tRNAs that read codons beginning with adenine. Is involved in the transfer of the threonylcarbamoyl moiety of threonylcarbamoyl-AMP (TC-AMP) to the N6 group of A37, together with TsaE and TsaB. TsaD likely plays a direct catalytic role in this reaction.</text>
</comment>
<comment type="catalytic activity">
    <reaction evidence="1">
        <text>L-threonylcarbamoyladenylate + adenosine(37) in tRNA = N(6)-L-threonylcarbamoyladenosine(37) in tRNA + AMP + H(+)</text>
        <dbReference type="Rhea" id="RHEA:37059"/>
        <dbReference type="Rhea" id="RHEA-COMP:10162"/>
        <dbReference type="Rhea" id="RHEA-COMP:10163"/>
        <dbReference type="ChEBI" id="CHEBI:15378"/>
        <dbReference type="ChEBI" id="CHEBI:73682"/>
        <dbReference type="ChEBI" id="CHEBI:74411"/>
        <dbReference type="ChEBI" id="CHEBI:74418"/>
        <dbReference type="ChEBI" id="CHEBI:456215"/>
        <dbReference type="EC" id="2.3.1.234"/>
    </reaction>
</comment>
<comment type="cofactor">
    <cofactor evidence="1">
        <name>Fe(2+)</name>
        <dbReference type="ChEBI" id="CHEBI:29033"/>
    </cofactor>
    <text evidence="1">Binds 1 Fe(2+) ion per subunit.</text>
</comment>
<comment type="subcellular location">
    <subcellularLocation>
        <location evidence="1">Cytoplasm</location>
    </subcellularLocation>
</comment>
<comment type="similarity">
    <text evidence="1">Belongs to the KAE1 / TsaD family.</text>
</comment>
<accession>Q3JZC7</accession>
<protein>
    <recommendedName>
        <fullName evidence="1">tRNA N6-adenosine threonylcarbamoyltransferase</fullName>
        <ecNumber evidence="1">2.3.1.234</ecNumber>
    </recommendedName>
    <alternativeName>
        <fullName evidence="1">N6-L-threonylcarbamoyladenine synthase</fullName>
        <shortName evidence="1">t(6)A synthase</shortName>
    </alternativeName>
    <alternativeName>
        <fullName evidence="1">t(6)A37 threonylcarbamoyladenosine biosynthesis protein TsaD</fullName>
    </alternativeName>
    <alternativeName>
        <fullName evidence="1">tRNA threonylcarbamoyladenosine biosynthesis protein TsaD</fullName>
    </alternativeName>
</protein>
<gene>
    <name evidence="1" type="primary">tsaD</name>
    <name type="synonym">gcp</name>
    <name type="ordered locus">SAK_1779</name>
</gene>
<feature type="chain" id="PRO_0000303557" description="tRNA N6-adenosine threonylcarbamoyltransferase">
    <location>
        <begin position="1"/>
        <end position="336"/>
    </location>
</feature>
<feature type="binding site" evidence="1">
    <location>
        <position position="114"/>
    </location>
    <ligand>
        <name>Fe cation</name>
        <dbReference type="ChEBI" id="CHEBI:24875"/>
    </ligand>
</feature>
<feature type="binding site" evidence="1">
    <location>
        <position position="118"/>
    </location>
    <ligand>
        <name>Fe cation</name>
        <dbReference type="ChEBI" id="CHEBI:24875"/>
    </ligand>
</feature>
<feature type="binding site" evidence="1">
    <location>
        <begin position="136"/>
        <end position="140"/>
    </location>
    <ligand>
        <name>substrate</name>
    </ligand>
</feature>
<feature type="binding site" evidence="1">
    <location>
        <position position="169"/>
    </location>
    <ligand>
        <name>substrate</name>
    </ligand>
</feature>
<feature type="binding site" evidence="1">
    <location>
        <position position="182"/>
    </location>
    <ligand>
        <name>substrate</name>
    </ligand>
</feature>
<feature type="binding site" evidence="1">
    <location>
        <position position="186"/>
    </location>
    <ligand>
        <name>substrate</name>
    </ligand>
</feature>
<feature type="binding site" evidence="1">
    <location>
        <position position="275"/>
    </location>
    <ligand>
        <name>substrate</name>
    </ligand>
</feature>
<feature type="binding site" evidence="1">
    <location>
        <position position="302"/>
    </location>
    <ligand>
        <name>Fe cation</name>
        <dbReference type="ChEBI" id="CHEBI:24875"/>
    </ligand>
</feature>
<organism>
    <name type="scientific">Streptococcus agalactiae serotype Ia (strain ATCC 27591 / A909 / CDC SS700)</name>
    <dbReference type="NCBI Taxonomy" id="205921"/>
    <lineage>
        <taxon>Bacteria</taxon>
        <taxon>Bacillati</taxon>
        <taxon>Bacillota</taxon>
        <taxon>Bacilli</taxon>
        <taxon>Lactobacillales</taxon>
        <taxon>Streptococcaceae</taxon>
        <taxon>Streptococcus</taxon>
    </lineage>
</organism>
<proteinExistence type="inferred from homology"/>